<sequence length="293" mass="34685">MKFENDNEKQVFDKLSRSLGNIIETKCDGYDELYGHKICKEIGSADEVQQYYNEDIAQSLLFKLCKAYQFNYDEIVTHLVKILKWRKKFNPLSCAFKETHNKELEDVGILTWYPEEEPNKRVVTWNLYGKLVKKKELFKDVQKFLRYRIGLMEKGIQLLNFQDEENCYMTQVHDYKTVSVWRMDSDMKSCVKEVINTFQTYYPELLYAKYFVNVPSVFAWAYDIIKTFVDENTRKKFVVLNDGKKLGKYLKQCPGDQFGGSSKSTIFEQNVKKVKPTAYASYLLERQEIEDVE</sequence>
<evidence type="ECO:0000250" key="1">
    <source>
        <dbReference type="UniProtKB" id="A6ZQI5"/>
    </source>
</evidence>
<evidence type="ECO:0000250" key="2">
    <source>
        <dbReference type="UniProtKB" id="P47008"/>
    </source>
</evidence>
<evidence type="ECO:0000255" key="3">
    <source>
        <dbReference type="PROSITE-ProRule" id="PRU00056"/>
    </source>
</evidence>
<evidence type="ECO:0000305" key="4"/>
<keyword id="KW-0963">Cytoplasm</keyword>
<keyword id="KW-0256">Endoplasmic reticulum</keyword>
<keyword id="KW-0349">Heme</keyword>
<keyword id="KW-0408">Iron</keyword>
<keyword id="KW-0445">Lipid transport</keyword>
<keyword id="KW-0472">Membrane</keyword>
<keyword id="KW-0479">Metal-binding</keyword>
<keyword id="KW-0492">Microsome</keyword>
<keyword id="KW-1185">Reference proteome</keyword>
<keyword id="KW-0813">Transport</keyword>
<organism>
    <name type="scientific">Candida glabrata (strain ATCC 2001 / BCRC 20586 / JCM 3761 / NBRC 0622 / NRRL Y-65 / CBS 138)</name>
    <name type="common">Yeast</name>
    <name type="synonym">Nakaseomyces glabratus</name>
    <dbReference type="NCBI Taxonomy" id="284593"/>
    <lineage>
        <taxon>Eukaryota</taxon>
        <taxon>Fungi</taxon>
        <taxon>Dikarya</taxon>
        <taxon>Ascomycota</taxon>
        <taxon>Saccharomycotina</taxon>
        <taxon>Saccharomycetes</taxon>
        <taxon>Saccharomycetales</taxon>
        <taxon>Saccharomycetaceae</taxon>
        <taxon>Nakaseomyces</taxon>
    </lineage>
</organism>
<dbReference type="EMBL" id="CR380955">
    <property type="protein sequence ID" value="CAG60445.1"/>
    <property type="molecule type" value="Genomic_DNA"/>
</dbReference>
<dbReference type="RefSeq" id="XP_447508.1">
    <property type="nucleotide sequence ID" value="XM_447508.1"/>
</dbReference>
<dbReference type="SMR" id="Q6FQI6"/>
<dbReference type="FunCoup" id="Q6FQI6">
    <property type="interactions" value="61"/>
</dbReference>
<dbReference type="STRING" id="284593.Q6FQI6"/>
<dbReference type="EnsemblFungi" id="CAGL0I05940g-T">
    <property type="protein sequence ID" value="CAGL0I05940g-T-p1"/>
    <property type="gene ID" value="CAGL0I05940g"/>
</dbReference>
<dbReference type="KEGG" id="cgr:2889226"/>
<dbReference type="CGD" id="CAL0129935">
    <property type="gene designation" value="CAGL0I05940g"/>
</dbReference>
<dbReference type="VEuPathDB" id="FungiDB:B1J91_I05940g"/>
<dbReference type="VEuPathDB" id="FungiDB:CAGL0I05940g"/>
<dbReference type="eggNOG" id="KOG1471">
    <property type="taxonomic scope" value="Eukaryota"/>
</dbReference>
<dbReference type="HOGENOM" id="CLU_045138_0_1_1"/>
<dbReference type="InParanoid" id="Q6FQI6"/>
<dbReference type="OMA" id="KRVVTWN"/>
<dbReference type="Proteomes" id="UP000002428">
    <property type="component" value="Chromosome I"/>
</dbReference>
<dbReference type="GO" id="GO:0032541">
    <property type="term" value="C:cortical endoplasmic reticulum"/>
    <property type="evidence" value="ECO:0007669"/>
    <property type="project" value="EnsemblFungi"/>
</dbReference>
<dbReference type="GO" id="GO:0005829">
    <property type="term" value="C:cytosol"/>
    <property type="evidence" value="ECO:0007669"/>
    <property type="project" value="EnsemblFungi"/>
</dbReference>
<dbReference type="GO" id="GO:0005789">
    <property type="term" value="C:endoplasmic reticulum membrane"/>
    <property type="evidence" value="ECO:0007669"/>
    <property type="project" value="UniProtKB-SubCell"/>
</dbReference>
<dbReference type="GO" id="GO:0005886">
    <property type="term" value="C:plasma membrane"/>
    <property type="evidence" value="ECO:0007669"/>
    <property type="project" value="EnsemblFungi"/>
</dbReference>
<dbReference type="GO" id="GO:0020037">
    <property type="term" value="F:heme binding"/>
    <property type="evidence" value="ECO:0007669"/>
    <property type="project" value="EnsemblFungi"/>
</dbReference>
<dbReference type="GO" id="GO:0046872">
    <property type="term" value="F:metal ion binding"/>
    <property type="evidence" value="ECO:0007669"/>
    <property type="project" value="UniProtKB-KW"/>
</dbReference>
<dbReference type="GO" id="GO:0008526">
    <property type="term" value="F:phosphatidylinositol transfer activity"/>
    <property type="evidence" value="ECO:0007669"/>
    <property type="project" value="EnsemblFungi"/>
</dbReference>
<dbReference type="GO" id="GO:0043001">
    <property type="term" value="P:Golgi to plasma membrane protein transport"/>
    <property type="evidence" value="ECO:0007669"/>
    <property type="project" value="EnsemblFungi"/>
</dbReference>
<dbReference type="GO" id="GO:0046488">
    <property type="term" value="P:phosphatidylinositol metabolic process"/>
    <property type="evidence" value="ECO:0007669"/>
    <property type="project" value="EnsemblFungi"/>
</dbReference>
<dbReference type="GO" id="GO:2000114">
    <property type="term" value="P:regulation of establishment of cell polarity"/>
    <property type="evidence" value="ECO:0007669"/>
    <property type="project" value="EnsemblFungi"/>
</dbReference>
<dbReference type="GO" id="GO:0017157">
    <property type="term" value="P:regulation of exocytosis"/>
    <property type="evidence" value="ECO:0007669"/>
    <property type="project" value="EnsemblFungi"/>
</dbReference>
<dbReference type="CDD" id="cd00170">
    <property type="entry name" value="SEC14"/>
    <property type="match status" value="1"/>
</dbReference>
<dbReference type="Gene3D" id="3.40.525.10">
    <property type="entry name" value="CRAL-TRIO lipid binding domain"/>
    <property type="match status" value="1"/>
</dbReference>
<dbReference type="InterPro" id="IPR001251">
    <property type="entry name" value="CRAL-TRIO_dom"/>
</dbReference>
<dbReference type="InterPro" id="IPR036865">
    <property type="entry name" value="CRAL-TRIO_dom_sf"/>
</dbReference>
<dbReference type="InterPro" id="IPR011074">
    <property type="entry name" value="CRAL/TRIO_N_dom"/>
</dbReference>
<dbReference type="InterPro" id="IPR042938">
    <property type="entry name" value="Sfh5"/>
</dbReference>
<dbReference type="PANTHER" id="PTHR47669">
    <property type="entry name" value="PHOSPHATIDYLINOSITOL TRANSFER PROTEIN SFH5"/>
    <property type="match status" value="1"/>
</dbReference>
<dbReference type="PANTHER" id="PTHR47669:SF1">
    <property type="entry name" value="PHOSPHATIDYLINOSITOL TRANSFER PROTEIN SFH5"/>
    <property type="match status" value="1"/>
</dbReference>
<dbReference type="Pfam" id="PF00650">
    <property type="entry name" value="CRAL_TRIO"/>
    <property type="match status" value="1"/>
</dbReference>
<dbReference type="Pfam" id="PF03765">
    <property type="entry name" value="CRAL_TRIO_N"/>
    <property type="match status" value="1"/>
</dbReference>
<dbReference type="SMART" id="SM00516">
    <property type="entry name" value="SEC14"/>
    <property type="match status" value="1"/>
</dbReference>
<dbReference type="SUPFAM" id="SSF52087">
    <property type="entry name" value="CRAL/TRIO domain"/>
    <property type="match status" value="1"/>
</dbReference>
<dbReference type="PROSITE" id="PS50191">
    <property type="entry name" value="CRAL_TRIO"/>
    <property type="match status" value="1"/>
</dbReference>
<reference key="1">
    <citation type="journal article" date="2004" name="Nature">
        <title>Genome evolution in yeasts.</title>
        <authorList>
            <person name="Dujon B."/>
            <person name="Sherman D."/>
            <person name="Fischer G."/>
            <person name="Durrens P."/>
            <person name="Casaregola S."/>
            <person name="Lafontaine I."/>
            <person name="de Montigny J."/>
            <person name="Marck C."/>
            <person name="Neuveglise C."/>
            <person name="Talla E."/>
            <person name="Goffard N."/>
            <person name="Frangeul L."/>
            <person name="Aigle M."/>
            <person name="Anthouard V."/>
            <person name="Babour A."/>
            <person name="Barbe V."/>
            <person name="Barnay S."/>
            <person name="Blanchin S."/>
            <person name="Beckerich J.-M."/>
            <person name="Beyne E."/>
            <person name="Bleykasten C."/>
            <person name="Boisrame A."/>
            <person name="Boyer J."/>
            <person name="Cattolico L."/>
            <person name="Confanioleri F."/>
            <person name="de Daruvar A."/>
            <person name="Despons L."/>
            <person name="Fabre E."/>
            <person name="Fairhead C."/>
            <person name="Ferry-Dumazet H."/>
            <person name="Groppi A."/>
            <person name="Hantraye F."/>
            <person name="Hennequin C."/>
            <person name="Jauniaux N."/>
            <person name="Joyet P."/>
            <person name="Kachouri R."/>
            <person name="Kerrest A."/>
            <person name="Koszul R."/>
            <person name="Lemaire M."/>
            <person name="Lesur I."/>
            <person name="Ma L."/>
            <person name="Muller H."/>
            <person name="Nicaud J.-M."/>
            <person name="Nikolski M."/>
            <person name="Oztas S."/>
            <person name="Ozier-Kalogeropoulos O."/>
            <person name="Pellenz S."/>
            <person name="Potier S."/>
            <person name="Richard G.-F."/>
            <person name="Straub M.-L."/>
            <person name="Suleau A."/>
            <person name="Swennen D."/>
            <person name="Tekaia F."/>
            <person name="Wesolowski-Louvel M."/>
            <person name="Westhof E."/>
            <person name="Wirth B."/>
            <person name="Zeniou-Meyer M."/>
            <person name="Zivanovic Y."/>
            <person name="Bolotin-Fukuhara M."/>
            <person name="Thierry A."/>
            <person name="Bouchier C."/>
            <person name="Caudron B."/>
            <person name="Scarpelli C."/>
            <person name="Gaillardin C."/>
            <person name="Weissenbach J."/>
            <person name="Wincker P."/>
            <person name="Souciet J.-L."/>
        </authorList>
    </citation>
    <scope>NUCLEOTIDE SEQUENCE [LARGE SCALE GENOMIC DNA]</scope>
    <source>
        <strain>ATCC 2001 / BCRC 20586 / JCM 3761 / NBRC 0622 / NRRL Y-65 / CBS 138</strain>
    </source>
</reference>
<protein>
    <recommendedName>
        <fullName>Phosphatidylinositol transfer protein SFH5</fullName>
        <shortName>PITP SFH5</shortName>
    </recommendedName>
</protein>
<feature type="chain" id="PRO_0000324974" description="Phosphatidylinositol transfer protein SFH5">
    <location>
        <begin position="1"/>
        <end position="293"/>
    </location>
</feature>
<feature type="domain" description="CRAL-TRIO" evidence="3">
    <location>
        <begin position="100"/>
        <end position="266"/>
    </location>
</feature>
<feature type="binding site" evidence="1">
    <location>
        <position position="128"/>
    </location>
    <ligand>
        <name>heme</name>
        <dbReference type="ChEBI" id="CHEBI:30413"/>
    </ligand>
</feature>
<feature type="binding site" evidence="1">
    <location>
        <position position="148"/>
    </location>
    <ligand>
        <name>heme</name>
        <dbReference type="ChEBI" id="CHEBI:30413"/>
    </ligand>
</feature>
<feature type="binding site" evidence="1">
    <location>
        <position position="173"/>
    </location>
    <ligand>
        <name>heme</name>
        <dbReference type="ChEBI" id="CHEBI:30413"/>
    </ligand>
</feature>
<feature type="binding site" description="proximal binding residue" evidence="1">
    <location>
        <position position="175"/>
    </location>
    <ligand>
        <name>heme</name>
        <dbReference type="ChEBI" id="CHEBI:30413"/>
    </ligand>
    <ligandPart>
        <name>Fe</name>
        <dbReference type="ChEBI" id="CHEBI:18248"/>
    </ligandPart>
</feature>
<feature type="binding site" evidence="1">
    <location>
        <position position="209"/>
    </location>
    <ligand>
        <name>heme</name>
        <dbReference type="ChEBI" id="CHEBI:30413"/>
    </ligand>
</feature>
<name>SFH5_CANGA</name>
<proteinExistence type="inferred from homology"/>
<gene>
    <name type="primary">SFH5</name>
    <name type="ordered locus">CAGL0I05940g</name>
</gene>
<comment type="function">
    <text evidence="2">Non-classical phosphatidylinositol (PtdIns) transfer protein (PITP), which exhibits PtdIns-binding/transfer activity in the absence of detectable PtdCho-binding/transfer activity. Regulates PtdIns(4,5)P2 homeostasis at the plasma membrane. Heme-binding protein that may play a role in organic oxidant-induced stress responses.</text>
</comment>
<comment type="catalytic activity">
    <reaction evidence="2">
        <text>a 1,2-diacyl-sn-glycero-3-phospho-(1D-myo-inositol)(in) = a 1,2-diacyl-sn-glycero-3-phospho-(1D-myo-inositol)(out)</text>
        <dbReference type="Rhea" id="RHEA:38691"/>
        <dbReference type="ChEBI" id="CHEBI:57880"/>
    </reaction>
    <physiologicalReaction direction="left-to-right" evidence="2">
        <dbReference type="Rhea" id="RHEA:38692"/>
    </physiologicalReaction>
</comment>
<comment type="cofactor">
    <cofactor evidence="1">
        <name>heme b</name>
        <dbReference type="ChEBI" id="CHEBI:60344"/>
    </cofactor>
</comment>
<comment type="subcellular location">
    <subcellularLocation>
        <location evidence="2">Cytoplasm</location>
    </subcellularLocation>
    <subcellularLocation>
        <location evidence="2">Endoplasmic reticulum membrane</location>
        <topology evidence="2">Peripheral membrane protein</topology>
    </subcellularLocation>
    <subcellularLocation>
        <location evidence="2">Microsome membrane</location>
        <topology evidence="2">Peripheral membrane protein</topology>
    </subcellularLocation>
</comment>
<comment type="similarity">
    <text evidence="4">Belongs to the SFH5 family.</text>
</comment>
<accession>Q6FQI6</accession>